<comment type="function">
    <text evidence="1">Single strand-specific metallo-endoribonuclease involved in late-stage 70S ribosome quality control and in maturation of the 3' terminus of the 16S rRNA.</text>
</comment>
<comment type="cofactor">
    <cofactor evidence="1">
        <name>Zn(2+)</name>
        <dbReference type="ChEBI" id="CHEBI:29105"/>
    </cofactor>
    <text evidence="1">Binds 1 zinc ion.</text>
</comment>
<comment type="subcellular location">
    <subcellularLocation>
        <location evidence="1">Cytoplasm</location>
    </subcellularLocation>
</comment>
<comment type="similarity">
    <text evidence="1">Belongs to the endoribonuclease YbeY family.</text>
</comment>
<keyword id="KW-0963">Cytoplasm</keyword>
<keyword id="KW-0255">Endonuclease</keyword>
<keyword id="KW-0378">Hydrolase</keyword>
<keyword id="KW-0479">Metal-binding</keyword>
<keyword id="KW-0540">Nuclease</keyword>
<keyword id="KW-0690">Ribosome biogenesis</keyword>
<keyword id="KW-0698">rRNA processing</keyword>
<keyword id="KW-0862">Zinc</keyword>
<feature type="chain" id="PRO_1000199997" description="Endoribonuclease YbeY">
    <location>
        <begin position="1"/>
        <end position="165"/>
    </location>
</feature>
<feature type="binding site" evidence="1">
    <location>
        <position position="130"/>
    </location>
    <ligand>
        <name>Zn(2+)</name>
        <dbReference type="ChEBI" id="CHEBI:29105"/>
        <note>catalytic</note>
    </ligand>
</feature>
<feature type="binding site" evidence="1">
    <location>
        <position position="134"/>
    </location>
    <ligand>
        <name>Zn(2+)</name>
        <dbReference type="ChEBI" id="CHEBI:29105"/>
        <note>catalytic</note>
    </ligand>
</feature>
<feature type="binding site" evidence="1">
    <location>
        <position position="140"/>
    </location>
    <ligand>
        <name>Zn(2+)</name>
        <dbReference type="ChEBI" id="CHEBI:29105"/>
        <note>catalytic</note>
    </ligand>
</feature>
<evidence type="ECO:0000255" key="1">
    <source>
        <dbReference type="HAMAP-Rule" id="MF_00009"/>
    </source>
</evidence>
<sequence>MYIEMVDETGQVSKEMLQQTQEILEFAAQKLGKEDKEMAVTFVTNERSHELNLEYRDTDRPTDVISLEYKPELEIAFDEEDLLENPELAEMMSEFDAYIGELFISIDKAHEQAEEYGHSFEREMGFLAVHGFLHINGYDHYTPEEEAEMFGLQEEILTAYGLTRQ</sequence>
<organism>
    <name type="scientific">Streptococcus pneumoniae (strain ATCC 700669 / Spain 23F-1)</name>
    <dbReference type="NCBI Taxonomy" id="561276"/>
    <lineage>
        <taxon>Bacteria</taxon>
        <taxon>Bacillati</taxon>
        <taxon>Bacillota</taxon>
        <taxon>Bacilli</taxon>
        <taxon>Lactobacillales</taxon>
        <taxon>Streptococcaceae</taxon>
        <taxon>Streptococcus</taxon>
    </lineage>
</organism>
<proteinExistence type="inferred from homology"/>
<reference key="1">
    <citation type="journal article" date="2009" name="J. Bacteriol.">
        <title>Role of conjugative elements in the evolution of the multidrug-resistant pandemic clone Streptococcus pneumoniae Spain23F ST81.</title>
        <authorList>
            <person name="Croucher N.J."/>
            <person name="Walker D."/>
            <person name="Romero P."/>
            <person name="Lennard N."/>
            <person name="Paterson G.K."/>
            <person name="Bason N.C."/>
            <person name="Mitchell A.M."/>
            <person name="Quail M.A."/>
            <person name="Andrew P.W."/>
            <person name="Parkhill J."/>
            <person name="Bentley S.D."/>
            <person name="Mitchell T.J."/>
        </authorList>
    </citation>
    <scope>NUCLEOTIDE SEQUENCE [LARGE SCALE GENOMIC DNA]</scope>
    <source>
        <strain>ATCC 700669 / Spain 23F-1</strain>
    </source>
</reference>
<dbReference type="EC" id="3.1.-.-" evidence="1"/>
<dbReference type="EMBL" id="FM211187">
    <property type="protein sequence ID" value="CAR68718.1"/>
    <property type="molecule type" value="Genomic_DNA"/>
</dbReference>
<dbReference type="RefSeq" id="WP_000275156.1">
    <property type="nucleotide sequence ID" value="NC_011900.1"/>
</dbReference>
<dbReference type="SMR" id="B8ZP64"/>
<dbReference type="GeneID" id="93739770"/>
<dbReference type="KEGG" id="sne:SPN23F08920"/>
<dbReference type="HOGENOM" id="CLU_106710_3_0_9"/>
<dbReference type="GO" id="GO:0005737">
    <property type="term" value="C:cytoplasm"/>
    <property type="evidence" value="ECO:0007669"/>
    <property type="project" value="UniProtKB-SubCell"/>
</dbReference>
<dbReference type="GO" id="GO:0004222">
    <property type="term" value="F:metalloendopeptidase activity"/>
    <property type="evidence" value="ECO:0007669"/>
    <property type="project" value="InterPro"/>
</dbReference>
<dbReference type="GO" id="GO:0004521">
    <property type="term" value="F:RNA endonuclease activity"/>
    <property type="evidence" value="ECO:0007669"/>
    <property type="project" value="UniProtKB-UniRule"/>
</dbReference>
<dbReference type="GO" id="GO:0008270">
    <property type="term" value="F:zinc ion binding"/>
    <property type="evidence" value="ECO:0007669"/>
    <property type="project" value="UniProtKB-UniRule"/>
</dbReference>
<dbReference type="GO" id="GO:0006364">
    <property type="term" value="P:rRNA processing"/>
    <property type="evidence" value="ECO:0007669"/>
    <property type="project" value="UniProtKB-UniRule"/>
</dbReference>
<dbReference type="Gene3D" id="3.40.390.30">
    <property type="entry name" value="Metalloproteases ('zincins'), catalytic domain"/>
    <property type="match status" value="1"/>
</dbReference>
<dbReference type="HAMAP" id="MF_00009">
    <property type="entry name" value="Endoribonucl_YbeY"/>
    <property type="match status" value="1"/>
</dbReference>
<dbReference type="InterPro" id="IPR023091">
    <property type="entry name" value="MetalPrtase_cat_dom_sf_prd"/>
</dbReference>
<dbReference type="InterPro" id="IPR002036">
    <property type="entry name" value="YbeY"/>
</dbReference>
<dbReference type="InterPro" id="IPR020549">
    <property type="entry name" value="YbeY_CS"/>
</dbReference>
<dbReference type="NCBIfam" id="TIGR00043">
    <property type="entry name" value="rRNA maturation RNase YbeY"/>
    <property type="match status" value="1"/>
</dbReference>
<dbReference type="PANTHER" id="PTHR46986">
    <property type="entry name" value="ENDORIBONUCLEASE YBEY, CHLOROPLASTIC"/>
    <property type="match status" value="1"/>
</dbReference>
<dbReference type="PANTHER" id="PTHR46986:SF1">
    <property type="entry name" value="ENDORIBONUCLEASE YBEY, CHLOROPLASTIC"/>
    <property type="match status" value="1"/>
</dbReference>
<dbReference type="Pfam" id="PF02130">
    <property type="entry name" value="YbeY"/>
    <property type="match status" value="1"/>
</dbReference>
<dbReference type="SUPFAM" id="SSF55486">
    <property type="entry name" value="Metalloproteases ('zincins'), catalytic domain"/>
    <property type="match status" value="1"/>
</dbReference>
<dbReference type="PROSITE" id="PS01306">
    <property type="entry name" value="UPF0054"/>
    <property type="match status" value="1"/>
</dbReference>
<name>YBEY_STRPJ</name>
<protein>
    <recommendedName>
        <fullName evidence="1">Endoribonuclease YbeY</fullName>
        <ecNumber evidence="1">3.1.-.-</ecNumber>
    </recommendedName>
</protein>
<accession>B8ZP64</accession>
<gene>
    <name evidence="1" type="primary">ybeY</name>
    <name type="ordered locus">SPN23F08920</name>
</gene>